<evidence type="ECO:0000255" key="1">
    <source>
        <dbReference type="HAMAP-Rule" id="MF_00937"/>
    </source>
</evidence>
<evidence type="ECO:0000255" key="2">
    <source>
        <dbReference type="PROSITE-ProRule" id="PRU01384"/>
    </source>
</evidence>
<evidence type="ECO:0000305" key="3"/>
<reference key="1">
    <citation type="journal article" date="1994" name="Mol. Microbiol.">
        <title>Cloning and primary structure of Staphylococcus aureus DNA topoisomerase IV: a primary target of fluoroquinolones.</title>
        <authorList>
            <person name="Ferrero L."/>
            <person name="Cameron B."/>
            <person name="Manse B."/>
            <person name="Lagneaux D."/>
            <person name="Crouzet J."/>
            <person name="Famechon A."/>
            <person name="Blanche F."/>
        </authorList>
    </citation>
    <scope>NUCLEOTIDE SEQUENCE [GENOMIC DNA]</scope>
    <source>
        <strain>FDA 574</strain>
    </source>
</reference>
<reference key="2">
    <citation type="journal article" date="1996" name="Antimicrob. Agents Chemother.">
        <title>Alterations in the DNA topoisomerase IV grlA gene responsible for quinolone resistance in Staphylococcus aureus.</title>
        <authorList>
            <person name="Yamagishi J."/>
            <person name="Kojima T."/>
            <person name="Oyamada Y."/>
            <person name="Fujimoto K."/>
            <person name="Hattori H."/>
            <person name="Nakamura S."/>
            <person name="Inoue M."/>
        </authorList>
    </citation>
    <scope>NUCLEOTIDE SEQUENCE [GENOMIC DNA]</scope>
    <source>
        <strain>KMP9</strain>
    </source>
</reference>
<feature type="chain" id="PRO_0000145414" description="DNA topoisomerase 4 subunit A">
    <location>
        <begin position="1"/>
        <end position="800"/>
    </location>
</feature>
<feature type="domain" description="Topo IIA-type catalytic" evidence="2">
    <location>
        <begin position="31"/>
        <end position="495"/>
    </location>
</feature>
<feature type="active site" description="O-(5'-phospho-DNA)-tyrosine intermediate" evidence="1">
    <location>
        <position position="119"/>
    </location>
</feature>
<feature type="site" description="Interaction with DNA" evidence="1">
    <location>
        <position position="39"/>
    </location>
</feature>
<feature type="site" description="Interaction with DNA" evidence="1">
    <location>
        <position position="75"/>
    </location>
</feature>
<feature type="site" description="Interaction with DNA" evidence="1">
    <location>
        <position position="77"/>
    </location>
</feature>
<feature type="site" description="Interaction with DNA" evidence="1">
    <location>
        <position position="88"/>
    </location>
</feature>
<feature type="site" description="Interaction with DNA" evidence="1">
    <location>
        <position position="94"/>
    </location>
</feature>
<feature type="site" description="Transition state stabilizer" evidence="1">
    <location>
        <position position="118"/>
    </location>
</feature>
<feature type="sequence variant" description="In strain: FDA 574.">
    <original>F</original>
    <variation>S</variation>
    <location>
        <position position="80"/>
    </location>
</feature>
<feature type="sequence variant" description="In strain: FDA 574.">
    <original>K</original>
    <variation>E</variation>
    <location>
        <position position="84"/>
    </location>
</feature>
<feature type="sequence conflict" description="In Ref. 1; AAA53116." evidence="3" ref="1">
    <original>S</original>
    <variation>G</variation>
    <location>
        <position position="267"/>
    </location>
</feature>
<feature type="sequence conflict" description="In Ref. 1; AAA53116." evidence="3" ref="1">
    <original>F</original>
    <variation>Y</variation>
    <location>
        <position position="410"/>
    </location>
</feature>
<feature type="sequence conflict" description="In Ref. 1; AAA53116." evidence="3" ref="1">
    <original>A</original>
    <variation>R</variation>
    <location>
        <position position="567"/>
    </location>
</feature>
<feature type="sequence conflict" description="In Ref. 1; AAA53116." evidence="3" ref="1">
    <original>F</original>
    <variation>Y</variation>
    <location>
        <position position="594"/>
    </location>
</feature>
<feature type="sequence conflict" description="In Ref. 1; AAA53116." evidence="3" ref="1">
    <original>A</original>
    <variation>V</variation>
    <location>
        <position position="688"/>
    </location>
</feature>
<protein>
    <recommendedName>
        <fullName evidence="1">DNA topoisomerase 4 subunit A</fullName>
        <ecNumber evidence="1">5.6.2.2</ecNumber>
    </recommendedName>
    <alternativeName>
        <fullName evidence="1">Topoisomerase IV subunit A</fullName>
    </alternativeName>
</protein>
<proteinExistence type="inferred from homology"/>
<accession>P0C1U9</accession>
<accession>P50073</accession>
<accession>P95682</accession>
<accession>P95683</accession>
<comment type="function">
    <text evidence="1">Topoisomerase IV is essential for chromosome segregation. It relaxes supercoiled DNA. Performs the decatenation events required during the replication of a circular DNA molecule.</text>
</comment>
<comment type="catalytic activity">
    <reaction evidence="1">
        <text>ATP-dependent breakage, passage and rejoining of double-stranded DNA.</text>
        <dbReference type="EC" id="5.6.2.2"/>
    </reaction>
</comment>
<comment type="subunit">
    <text>Heterotetramer composed of ParC and ParE.</text>
</comment>
<comment type="subcellular location">
    <subcellularLocation>
        <location evidence="1">Cell membrane</location>
        <topology evidence="1">Peripheral membrane protein</topology>
    </subcellularLocation>
</comment>
<comment type="miscellaneous">
    <text>Phe-80 and Lys-84 confer resistance to fluoroquinolones.</text>
</comment>
<comment type="similarity">
    <text evidence="1">Belongs to the type II topoisomerase GyrA/ParC subunit family. ParC type 2 subfamily.</text>
</comment>
<name>PARC_STAAU</name>
<sequence>MSEIIQDLSLEDVLGDRFGRYSKYIIQERALPDVRDGLKPVQRRILYAMYSSGNTHDKNFRKSAKTVGDVIGQYHPHGDFSVYKAMVRLSQDWKLRHVLIEMHGNNGSIDNDPPAAMRYTEAKLSLLAEELLRDINKETVSFIPNYDDTTLEPMVLPSRFPNLLVNGSTGISAGYATDIPPHNLAEVIQATLKYIDNPDITVNQLMKYIKGPDFPTGGIIQGIDGIKKAYESGKGRIIVRSKVEEETLRNGRKQLIITEIPYEVNKSSLVKRIDELRADKKVDGIVEVRDETDRTGLRIAIELKKDVNSESIKNYLYKNSDLQISYNFNMVAISDGRPKLMGIRQIIDSYLNHQIEVVANRTKFELDNAEKRMHIVEGLIKALSILDKVIELIRSSKNKRDAKENLIEVFEFTEEQAEAIVMLQLYRLTNTDIVALEGEHKELEALIKQLRHILDNHDALLNVIKEELNEIKKKFKSERLSLIEAEIEEIKIDKEVMVPSEEVILSMTRHGYIKRTSIRSFNASGVEDIGLKDGDSLLKHQEVNTQDTVLVFTNKGRYLFIPVHKLADIRWKELGQHVSQIVPIEEDEVVINVFNEKDFNTDAFYVFATQNGMIKKSTVPLFKTTRFNKPLIATKVKENDDLISVMRFEKDQLITVITNKGMSLTYNTSELSDTGLRAAGVKSINLKAEDFVVMTEGVSENDTILMATQRGSLKRISFKILQVAKRAQRGITLLKELKKNPHRIVAAHVVTGEHSQYTLYSKSNEEHGLINDIHKSEQYTNGSFIVDTDDFGEVIDMYIS</sequence>
<gene>
    <name evidence="1" type="primary">parC</name>
    <name type="synonym">grlA</name>
</gene>
<dbReference type="EC" id="5.6.2.2" evidence="1"/>
<dbReference type="EMBL" id="L25288">
    <property type="protein sequence ID" value="AAA53116.1"/>
    <property type="molecule type" value="Genomic_DNA"/>
</dbReference>
<dbReference type="EMBL" id="D67074">
    <property type="protein sequence ID" value="BAA11085.1"/>
    <property type="molecule type" value="Genomic_DNA"/>
</dbReference>
<dbReference type="PIR" id="S54427">
    <property type="entry name" value="S54427"/>
</dbReference>
<dbReference type="RefSeq" id="WP_001289554.1">
    <property type="nucleotide sequence ID" value="NZ_QEKA01000042.1"/>
</dbReference>
<dbReference type="SMR" id="P0C1U9"/>
<dbReference type="BindingDB" id="P0C1U9"/>
<dbReference type="ChEMBL" id="CHEMBL4088"/>
<dbReference type="DrugBank" id="DB00537">
    <property type="generic name" value="Ciprofloxacin"/>
</dbReference>
<dbReference type="DrugBank" id="DB01059">
    <property type="generic name" value="Norfloxacin"/>
</dbReference>
<dbReference type="DrugCentral" id="P0C1U9"/>
<dbReference type="PATRIC" id="fig|1280.3364.peg.2251"/>
<dbReference type="GO" id="GO:0005694">
    <property type="term" value="C:chromosome"/>
    <property type="evidence" value="ECO:0007669"/>
    <property type="project" value="InterPro"/>
</dbReference>
<dbReference type="GO" id="GO:0005737">
    <property type="term" value="C:cytoplasm"/>
    <property type="evidence" value="ECO:0007669"/>
    <property type="project" value="TreeGrafter"/>
</dbReference>
<dbReference type="GO" id="GO:0009330">
    <property type="term" value="C:DNA topoisomerase type II (double strand cut, ATP-hydrolyzing) complex"/>
    <property type="evidence" value="ECO:0007669"/>
    <property type="project" value="TreeGrafter"/>
</dbReference>
<dbReference type="GO" id="GO:0019897">
    <property type="term" value="C:extrinsic component of plasma membrane"/>
    <property type="evidence" value="ECO:0007669"/>
    <property type="project" value="UniProtKB-UniRule"/>
</dbReference>
<dbReference type="GO" id="GO:0005524">
    <property type="term" value="F:ATP binding"/>
    <property type="evidence" value="ECO:0007669"/>
    <property type="project" value="InterPro"/>
</dbReference>
<dbReference type="GO" id="GO:0003677">
    <property type="term" value="F:DNA binding"/>
    <property type="evidence" value="ECO:0007669"/>
    <property type="project" value="UniProtKB-UniRule"/>
</dbReference>
<dbReference type="GO" id="GO:0034335">
    <property type="term" value="F:DNA negative supercoiling activity"/>
    <property type="evidence" value="ECO:0007669"/>
    <property type="project" value="UniProtKB-ARBA"/>
</dbReference>
<dbReference type="GO" id="GO:0007059">
    <property type="term" value="P:chromosome segregation"/>
    <property type="evidence" value="ECO:0007669"/>
    <property type="project" value="UniProtKB-UniRule"/>
</dbReference>
<dbReference type="GO" id="GO:0006265">
    <property type="term" value="P:DNA topological change"/>
    <property type="evidence" value="ECO:0007669"/>
    <property type="project" value="UniProtKB-UniRule"/>
</dbReference>
<dbReference type="GO" id="GO:0046677">
    <property type="term" value="P:response to antibiotic"/>
    <property type="evidence" value="ECO:0007669"/>
    <property type="project" value="UniProtKB-KW"/>
</dbReference>
<dbReference type="CDD" id="cd00187">
    <property type="entry name" value="TOP4c"/>
    <property type="match status" value="1"/>
</dbReference>
<dbReference type="FunFam" id="1.10.268.10:FF:000001">
    <property type="entry name" value="DNA gyrase subunit A"/>
    <property type="match status" value="1"/>
</dbReference>
<dbReference type="FunFam" id="3.30.1360.40:FF:000002">
    <property type="entry name" value="DNA gyrase subunit A"/>
    <property type="match status" value="1"/>
</dbReference>
<dbReference type="FunFam" id="3.90.199.10:FF:000001">
    <property type="entry name" value="DNA gyrase subunit A"/>
    <property type="match status" value="1"/>
</dbReference>
<dbReference type="FunFam" id="2.120.10.90:FF:000005">
    <property type="entry name" value="DNA topoisomerase 4 subunit A"/>
    <property type="match status" value="1"/>
</dbReference>
<dbReference type="Gene3D" id="3.30.1360.40">
    <property type="match status" value="1"/>
</dbReference>
<dbReference type="Gene3D" id="2.120.10.90">
    <property type="entry name" value="DNA gyrase/topoisomerase IV, subunit A, C-terminal"/>
    <property type="match status" value="1"/>
</dbReference>
<dbReference type="Gene3D" id="3.90.199.10">
    <property type="entry name" value="Topoisomerase II, domain 5"/>
    <property type="match status" value="1"/>
</dbReference>
<dbReference type="Gene3D" id="1.10.268.10">
    <property type="entry name" value="Topoisomerase, domain 3"/>
    <property type="match status" value="1"/>
</dbReference>
<dbReference type="HAMAP" id="MF_00937">
    <property type="entry name" value="ParC_type2"/>
    <property type="match status" value="1"/>
</dbReference>
<dbReference type="InterPro" id="IPR006691">
    <property type="entry name" value="GyrA/parC_rep"/>
</dbReference>
<dbReference type="InterPro" id="IPR035516">
    <property type="entry name" value="Gyrase/topoIV_suA_C"/>
</dbReference>
<dbReference type="InterPro" id="IPR013760">
    <property type="entry name" value="Topo_IIA-like_dom_sf"/>
</dbReference>
<dbReference type="InterPro" id="IPR013758">
    <property type="entry name" value="Topo_IIA_A/C_ab"/>
</dbReference>
<dbReference type="InterPro" id="IPR013757">
    <property type="entry name" value="Topo_IIA_A_a_sf"/>
</dbReference>
<dbReference type="InterPro" id="IPR002205">
    <property type="entry name" value="Topo_IIA_dom_A"/>
</dbReference>
<dbReference type="InterPro" id="IPR005741">
    <property type="entry name" value="TopoIV_A_Gpos"/>
</dbReference>
<dbReference type="InterPro" id="IPR050220">
    <property type="entry name" value="Type_II_DNA_Topoisomerases"/>
</dbReference>
<dbReference type="NCBIfam" id="TIGR01061">
    <property type="entry name" value="parC_Gpos"/>
    <property type="match status" value="1"/>
</dbReference>
<dbReference type="NCBIfam" id="NF004044">
    <property type="entry name" value="PRK05561.1"/>
    <property type="match status" value="1"/>
</dbReference>
<dbReference type="PANTHER" id="PTHR43493">
    <property type="entry name" value="DNA GYRASE/TOPOISOMERASE SUBUNIT A"/>
    <property type="match status" value="1"/>
</dbReference>
<dbReference type="PANTHER" id="PTHR43493:SF9">
    <property type="entry name" value="DNA TOPOISOMERASE 4 SUBUNIT A"/>
    <property type="match status" value="1"/>
</dbReference>
<dbReference type="Pfam" id="PF03989">
    <property type="entry name" value="DNA_gyraseA_C"/>
    <property type="match status" value="5"/>
</dbReference>
<dbReference type="Pfam" id="PF00521">
    <property type="entry name" value="DNA_topoisoIV"/>
    <property type="match status" value="1"/>
</dbReference>
<dbReference type="SMART" id="SM00434">
    <property type="entry name" value="TOP4c"/>
    <property type="match status" value="1"/>
</dbReference>
<dbReference type="SUPFAM" id="SSF101904">
    <property type="entry name" value="GyrA/ParC C-terminal domain-like"/>
    <property type="match status" value="1"/>
</dbReference>
<dbReference type="SUPFAM" id="SSF56719">
    <property type="entry name" value="Type II DNA topoisomerase"/>
    <property type="match status" value="1"/>
</dbReference>
<dbReference type="PROSITE" id="PS52040">
    <property type="entry name" value="TOPO_IIA"/>
    <property type="match status" value="1"/>
</dbReference>
<keyword id="KW-0046">Antibiotic resistance</keyword>
<keyword id="KW-1003">Cell membrane</keyword>
<keyword id="KW-0238">DNA-binding</keyword>
<keyword id="KW-0413">Isomerase</keyword>
<keyword id="KW-0472">Membrane</keyword>
<keyword id="KW-0799">Topoisomerase</keyword>
<organism>
    <name type="scientific">Staphylococcus aureus</name>
    <dbReference type="NCBI Taxonomy" id="1280"/>
    <lineage>
        <taxon>Bacteria</taxon>
        <taxon>Bacillati</taxon>
        <taxon>Bacillota</taxon>
        <taxon>Bacilli</taxon>
        <taxon>Bacillales</taxon>
        <taxon>Staphylococcaceae</taxon>
        <taxon>Staphylococcus</taxon>
    </lineage>
</organism>